<dbReference type="EC" id="4.2.3.5" evidence="1"/>
<dbReference type="EMBL" id="CP000743">
    <property type="protein sequence ID" value="ABR56273.1"/>
    <property type="molecule type" value="Genomic_DNA"/>
</dbReference>
<dbReference type="RefSeq" id="WP_011973405.1">
    <property type="nucleotide sequence ID" value="NC_009635.1"/>
</dbReference>
<dbReference type="SMR" id="A6UUV1"/>
<dbReference type="STRING" id="419665.Maeo_0689"/>
<dbReference type="GeneID" id="5326689"/>
<dbReference type="KEGG" id="mae:Maeo_0689"/>
<dbReference type="eggNOG" id="arCOG04133">
    <property type="taxonomic scope" value="Archaea"/>
</dbReference>
<dbReference type="HOGENOM" id="CLU_034547_0_2_2"/>
<dbReference type="OrthoDB" id="33049at2157"/>
<dbReference type="UniPathway" id="UPA00053">
    <property type="reaction ID" value="UER00090"/>
</dbReference>
<dbReference type="Proteomes" id="UP000001106">
    <property type="component" value="Chromosome"/>
</dbReference>
<dbReference type="GO" id="GO:0005829">
    <property type="term" value="C:cytosol"/>
    <property type="evidence" value="ECO:0007669"/>
    <property type="project" value="TreeGrafter"/>
</dbReference>
<dbReference type="GO" id="GO:0004107">
    <property type="term" value="F:chorismate synthase activity"/>
    <property type="evidence" value="ECO:0007669"/>
    <property type="project" value="UniProtKB-UniRule"/>
</dbReference>
<dbReference type="GO" id="GO:0010181">
    <property type="term" value="F:FMN binding"/>
    <property type="evidence" value="ECO:0007669"/>
    <property type="project" value="TreeGrafter"/>
</dbReference>
<dbReference type="GO" id="GO:0008652">
    <property type="term" value="P:amino acid biosynthetic process"/>
    <property type="evidence" value="ECO:0007669"/>
    <property type="project" value="UniProtKB-KW"/>
</dbReference>
<dbReference type="GO" id="GO:0009073">
    <property type="term" value="P:aromatic amino acid family biosynthetic process"/>
    <property type="evidence" value="ECO:0007669"/>
    <property type="project" value="UniProtKB-KW"/>
</dbReference>
<dbReference type="GO" id="GO:0009423">
    <property type="term" value="P:chorismate biosynthetic process"/>
    <property type="evidence" value="ECO:0007669"/>
    <property type="project" value="UniProtKB-UniRule"/>
</dbReference>
<dbReference type="CDD" id="cd07304">
    <property type="entry name" value="Chorismate_synthase"/>
    <property type="match status" value="1"/>
</dbReference>
<dbReference type="Gene3D" id="3.60.150.10">
    <property type="entry name" value="Chorismate synthase AroC"/>
    <property type="match status" value="1"/>
</dbReference>
<dbReference type="HAMAP" id="MF_00300">
    <property type="entry name" value="Chorismate_synth"/>
    <property type="match status" value="1"/>
</dbReference>
<dbReference type="InterPro" id="IPR000453">
    <property type="entry name" value="Chorismate_synth"/>
</dbReference>
<dbReference type="InterPro" id="IPR035904">
    <property type="entry name" value="Chorismate_synth_AroC_sf"/>
</dbReference>
<dbReference type="InterPro" id="IPR020541">
    <property type="entry name" value="Chorismate_synthase_CS"/>
</dbReference>
<dbReference type="NCBIfam" id="TIGR00033">
    <property type="entry name" value="aroC"/>
    <property type="match status" value="1"/>
</dbReference>
<dbReference type="NCBIfam" id="NF003793">
    <property type="entry name" value="PRK05382.1"/>
    <property type="match status" value="1"/>
</dbReference>
<dbReference type="PANTHER" id="PTHR21085">
    <property type="entry name" value="CHORISMATE SYNTHASE"/>
    <property type="match status" value="1"/>
</dbReference>
<dbReference type="PANTHER" id="PTHR21085:SF0">
    <property type="entry name" value="CHORISMATE SYNTHASE"/>
    <property type="match status" value="1"/>
</dbReference>
<dbReference type="Pfam" id="PF01264">
    <property type="entry name" value="Chorismate_synt"/>
    <property type="match status" value="1"/>
</dbReference>
<dbReference type="PIRSF" id="PIRSF001456">
    <property type="entry name" value="Chorismate_synth"/>
    <property type="match status" value="1"/>
</dbReference>
<dbReference type="SUPFAM" id="SSF103263">
    <property type="entry name" value="Chorismate synthase, AroC"/>
    <property type="match status" value="1"/>
</dbReference>
<dbReference type="PROSITE" id="PS00787">
    <property type="entry name" value="CHORISMATE_SYNTHASE_1"/>
    <property type="match status" value="1"/>
</dbReference>
<dbReference type="PROSITE" id="PS00788">
    <property type="entry name" value="CHORISMATE_SYNTHASE_2"/>
    <property type="match status" value="1"/>
</dbReference>
<proteinExistence type="inferred from homology"/>
<reference key="1">
    <citation type="submission" date="2007-06" db="EMBL/GenBank/DDBJ databases">
        <title>Complete sequence of Methanococcus aeolicus Nankai-3.</title>
        <authorList>
            <consortium name="US DOE Joint Genome Institute"/>
            <person name="Copeland A."/>
            <person name="Lucas S."/>
            <person name="Lapidus A."/>
            <person name="Barry K."/>
            <person name="Glavina del Rio T."/>
            <person name="Dalin E."/>
            <person name="Tice H."/>
            <person name="Pitluck S."/>
            <person name="Chain P."/>
            <person name="Malfatti S."/>
            <person name="Shin M."/>
            <person name="Vergez L."/>
            <person name="Schmutz J."/>
            <person name="Larimer F."/>
            <person name="Land M."/>
            <person name="Hauser L."/>
            <person name="Kyrpides N."/>
            <person name="Lykidis A."/>
            <person name="Sieprawska-Lupa M."/>
            <person name="Whitman W.B."/>
            <person name="Richardson P."/>
        </authorList>
    </citation>
    <scope>NUCLEOTIDE SEQUENCE [LARGE SCALE GENOMIC DNA]</scope>
    <source>
        <strain>ATCC BAA-1280 / DSM 17508 / OCM 812 / Nankai-3</strain>
    </source>
</reference>
<feature type="chain" id="PRO_0000322432" description="Chorismate synthase">
    <location>
        <begin position="1"/>
        <end position="373"/>
    </location>
</feature>
<feature type="binding site" evidence="1">
    <location>
        <position position="46"/>
    </location>
    <ligand>
        <name>NADP(+)</name>
        <dbReference type="ChEBI" id="CHEBI:58349"/>
    </ligand>
</feature>
<feature type="binding site" evidence="1">
    <location>
        <begin position="123"/>
        <end position="125"/>
    </location>
    <ligand>
        <name>FMN</name>
        <dbReference type="ChEBI" id="CHEBI:58210"/>
    </ligand>
</feature>
<feature type="binding site" evidence="1">
    <location>
        <begin position="250"/>
        <end position="251"/>
    </location>
    <ligand>
        <name>FMN</name>
        <dbReference type="ChEBI" id="CHEBI:58210"/>
    </ligand>
</feature>
<feature type="binding site" evidence="1">
    <location>
        <position position="295"/>
    </location>
    <ligand>
        <name>FMN</name>
        <dbReference type="ChEBI" id="CHEBI:58210"/>
    </ligand>
</feature>
<feature type="binding site" evidence="1">
    <location>
        <begin position="310"/>
        <end position="314"/>
    </location>
    <ligand>
        <name>FMN</name>
        <dbReference type="ChEBI" id="CHEBI:58210"/>
    </ligand>
</feature>
<feature type="binding site" evidence="1">
    <location>
        <position position="337"/>
    </location>
    <ligand>
        <name>FMN</name>
        <dbReference type="ChEBI" id="CHEBI:58210"/>
    </ligand>
</feature>
<comment type="function">
    <text evidence="1">Catalyzes the anti-1,4-elimination of the C-3 phosphate and the C-6 proR hydrogen from 5-enolpyruvylshikimate-3-phosphate (EPSP) to yield chorismate, which is the branch point compound that serves as the starting substrate for the three terminal pathways of aromatic amino acid biosynthesis. This reaction introduces a second double bond into the aromatic ring system.</text>
</comment>
<comment type="catalytic activity">
    <reaction evidence="1">
        <text>5-O-(1-carboxyvinyl)-3-phosphoshikimate = chorismate + phosphate</text>
        <dbReference type="Rhea" id="RHEA:21020"/>
        <dbReference type="ChEBI" id="CHEBI:29748"/>
        <dbReference type="ChEBI" id="CHEBI:43474"/>
        <dbReference type="ChEBI" id="CHEBI:57701"/>
        <dbReference type="EC" id="4.2.3.5"/>
    </reaction>
</comment>
<comment type="cofactor">
    <cofactor evidence="1">
        <name>FMNH2</name>
        <dbReference type="ChEBI" id="CHEBI:57618"/>
    </cofactor>
    <text evidence="1">Reduced FMN (FMNH(2)).</text>
</comment>
<comment type="pathway">
    <text evidence="1">Metabolic intermediate biosynthesis; chorismate biosynthesis; chorismate from D-erythrose 4-phosphate and phosphoenolpyruvate: step 7/7.</text>
</comment>
<comment type="similarity">
    <text evidence="1">Belongs to the chorismate synthase family.</text>
</comment>
<accession>A6UUV1</accession>
<protein>
    <recommendedName>
        <fullName evidence="1">Chorismate synthase</fullName>
        <shortName evidence="1">CS</shortName>
        <ecNumber evidence="1">4.2.3.5</ecNumber>
    </recommendedName>
    <alternativeName>
        <fullName evidence="1">5-enolpyruvylshikimate-3-phosphate phospholyase</fullName>
    </alternativeName>
</protein>
<name>AROC_META3</name>
<organism>
    <name type="scientific">Methanococcus aeolicus (strain ATCC BAA-1280 / DSM 17508 / OCM 812 / Nankai-3)</name>
    <dbReference type="NCBI Taxonomy" id="419665"/>
    <lineage>
        <taxon>Archaea</taxon>
        <taxon>Methanobacteriati</taxon>
        <taxon>Methanobacteriota</taxon>
        <taxon>Methanomada group</taxon>
        <taxon>Methanococci</taxon>
        <taxon>Methanococcales</taxon>
        <taxon>Methanococcaceae</taxon>
        <taxon>Methanococcus</taxon>
    </lineage>
</organism>
<gene>
    <name evidence="1" type="primary">aroC</name>
    <name type="ordered locus">Maeo_0689</name>
</gene>
<sequence>MNTIGKSFRITAWGESHGKALGAVVDGCPSNLPLTGEDIQKELNRRRPGYSLFSTPRKEGDKVEILSGIFEGKTTGTPISAIVYNTNQKSKDYSHLKNTPRPGHADLSYKLKYGNYDYRGGGRSSGRTTIGHTIGGAIAKKLLDYTHNIKIIGYTTKIGNIEGDFNYYNSIENNEKMINEELINKIENNPLRCPSSNADEMKDFVLNAMENKNSVGGVIELIALNVPVGVGNPIFGKLNGELSNAIMNINAVKGVEIGRGFESAELLGSEMNDEYYYDENNNIKLKTNNCGGVLGGISCGAPLVIRVAVKPTPSISAVQSTINIENKTTENLEIGGRHDPIIVPRVIPVLESMVAIALSDLMIRGGFIHPCKL</sequence>
<evidence type="ECO:0000255" key="1">
    <source>
        <dbReference type="HAMAP-Rule" id="MF_00300"/>
    </source>
</evidence>
<keyword id="KW-0028">Amino-acid biosynthesis</keyword>
<keyword id="KW-0057">Aromatic amino acid biosynthesis</keyword>
<keyword id="KW-0274">FAD</keyword>
<keyword id="KW-0285">Flavoprotein</keyword>
<keyword id="KW-0288">FMN</keyword>
<keyword id="KW-0456">Lyase</keyword>
<keyword id="KW-0521">NADP</keyword>